<protein>
    <recommendedName>
        <fullName>Probable arabinosyltransferase A</fullName>
        <ecNumber>2.4.2.-</ecNumber>
    </recommendedName>
</protein>
<dbReference type="EC" id="2.4.2.-"/>
<dbReference type="EMBL" id="U66560">
    <property type="protein sequence ID" value="AAC44547.1"/>
    <property type="molecule type" value="Genomic_DNA"/>
</dbReference>
<dbReference type="SMR" id="P71485"/>
<dbReference type="CAZy" id="GT53">
    <property type="family name" value="Glycosyltransferase Family 53"/>
</dbReference>
<dbReference type="GO" id="GO:0005886">
    <property type="term" value="C:plasma membrane"/>
    <property type="evidence" value="ECO:0007669"/>
    <property type="project" value="UniProtKB-SubCell"/>
</dbReference>
<dbReference type="GO" id="GO:0052636">
    <property type="term" value="F:arabinosyltransferase activity"/>
    <property type="evidence" value="ECO:0007669"/>
    <property type="project" value="InterPro"/>
</dbReference>
<dbReference type="GO" id="GO:0071766">
    <property type="term" value="P:Actinobacterium-type cell wall biogenesis"/>
    <property type="evidence" value="ECO:0007669"/>
    <property type="project" value="InterPro"/>
</dbReference>
<dbReference type="GO" id="GO:0071555">
    <property type="term" value="P:cell wall organization"/>
    <property type="evidence" value="ECO:0007669"/>
    <property type="project" value="UniProtKB-KW"/>
</dbReference>
<dbReference type="GO" id="GO:0046677">
    <property type="term" value="P:response to antibiotic"/>
    <property type="evidence" value="ECO:0007669"/>
    <property type="project" value="UniProtKB-KW"/>
</dbReference>
<dbReference type="FunFam" id="2.60.120.940:FF:000001">
    <property type="entry name" value="Membrane indolylacetylinositol arabinosyltransferase embC"/>
    <property type="match status" value="1"/>
</dbReference>
<dbReference type="Gene3D" id="3.40.190.160">
    <property type="match status" value="1"/>
</dbReference>
<dbReference type="Gene3D" id="2.60.120.610">
    <property type="entry name" value="arabinofuranosyltransferase like domain"/>
    <property type="match status" value="1"/>
</dbReference>
<dbReference type="Gene3D" id="2.60.120.940">
    <property type="entry name" value="EmbC, C-terminal domain, subdomain 2"/>
    <property type="match status" value="1"/>
</dbReference>
<dbReference type="InterPro" id="IPR032731">
    <property type="entry name" value="Arabino_trans_C"/>
</dbReference>
<dbReference type="InterPro" id="IPR042486">
    <property type="entry name" value="Arabino_trans_C_2"/>
</dbReference>
<dbReference type="InterPro" id="IPR007680">
    <property type="entry name" value="Arabino_trans_central"/>
</dbReference>
<dbReference type="InterPro" id="IPR040920">
    <property type="entry name" value="Arabino_trans_N"/>
</dbReference>
<dbReference type="InterPro" id="IPR027451">
    <property type="entry name" value="EmbABC_dom1"/>
</dbReference>
<dbReference type="Pfam" id="PF14896">
    <property type="entry name" value="Arabino_trans_C"/>
    <property type="match status" value="1"/>
</dbReference>
<dbReference type="Pfam" id="PF17689">
    <property type="entry name" value="Arabino_trans_N"/>
    <property type="match status" value="1"/>
</dbReference>
<dbReference type="Pfam" id="PF04602">
    <property type="entry name" value="Arabinose_trans"/>
    <property type="match status" value="1"/>
</dbReference>
<gene>
    <name type="primary">embA</name>
</gene>
<keyword id="KW-0046">Antibiotic resistance</keyword>
<keyword id="KW-1003">Cell membrane</keyword>
<keyword id="KW-0961">Cell wall biogenesis/degradation</keyword>
<keyword id="KW-0328">Glycosyltransferase</keyword>
<keyword id="KW-0472">Membrane</keyword>
<keyword id="KW-0808">Transferase</keyword>
<keyword id="KW-0812">Transmembrane</keyword>
<keyword id="KW-1133">Transmembrane helix</keyword>
<comment type="function">
    <text>Arabinosyl transferase responsible for the polymerization of arabinose into the arabinan of arabinogalactan.</text>
</comment>
<comment type="subcellular location">
    <subcellularLocation>
        <location evidence="3">Cell membrane</location>
        <topology evidence="3">Multi-pass membrane protein</topology>
    </subcellularLocation>
</comment>
<comment type="similarity">
    <text evidence="3">Belongs to the emb family.</text>
</comment>
<organism>
    <name type="scientific">Mycobacterium avium</name>
    <dbReference type="NCBI Taxonomy" id="1764"/>
    <lineage>
        <taxon>Bacteria</taxon>
        <taxon>Bacillati</taxon>
        <taxon>Actinomycetota</taxon>
        <taxon>Actinomycetes</taxon>
        <taxon>Mycobacteriales</taxon>
        <taxon>Mycobacteriaceae</taxon>
        <taxon>Mycobacterium</taxon>
        <taxon>Mycobacterium avium complex (MAC)</taxon>
    </lineage>
</organism>
<sequence length="1108" mass="117405">MPHDGKQRSQRIPRSVAAVAGIAGLLLCLAVPLLPVRQTTATVLWPQGTVDGHVSQITAPLVSGAPRALDISIPCPAVATLPADGGLVVSTLPPGGMDAGKNGLFVRANKDVVVVAFRDTVAAVAQRPAVAAGACSVLHAWADAGAAGAEFVGIPGAAGTLPAEKKPQVGGIFTDLKVPAGPGLSARVDIDTRFITAPTVLKQIVMVLGTLAVLTAIVALAVLDRRSRGGGTLINWRSPIAWLSRYRPGTHLANWRRVGLATWIADAAVLATLLLWHVVGATSSDDGYNLTIARVAPKAGYLVDYYRYFGTTDAPFDWYLGLLSRLASVSTAGVWMRLPATLAGIGCWLIISHWVLRRLGPGRGGLAANRVAVFTAGAVFVAAWLPFNNGLRPEPLIALGVLVTWMLVERAIALQRLAPAAVAVVVALLTATLAPQGLIAVAALLTGARAVAQAIRRRRASDGLLAPLAVLAAALSLILVVVFRSQTVATVLESARIKYKVGPTIAWYQDWLRYYFLTVESNPDGSMARRFAVLVMLLCLFGMLVILLRRGHVPGVASGPRWRLIGTTAVGLLLLTFTPTKWAVQFGAFAGLAGALGALTAFACSRIGLHNRRNLTLYVTALLFVLAWATSGINGWFYVGNYGVPWYDIQPVIASHPVTSMFLTLSIITGLLAAWQHFRMDYAGHTEVKDSRRNRVLASTPLLVVATIMVVGEVASLTKGAVFRYPLYTTGKANLAAIASGLSPTSCAMADDVLAEPDANAGMLQPLPGQTFGPDGPLGGVNPVGFKPDGVGDDLQSDPVVTKPGLVNSDASPNKPNVAYSDSAGTAGGKGPVGVNGSHAALPFGLDPARTPVMGSYGENSLAATATSAWYQLPPRTPDRPLVVVSAAGAIWSYKEDGTFTYGQSLKLQWGVARPDGSTVPLAEVQPIDIGPQPAWRNLRFPLAWAPPEANVARIVAYDPNLSSEQWFAFTPPRVPVTETLQQLIGSQTPVMMDIATAANFPCQRPFSEHLGVAELPAYRILPDRKQTAASSNLWQSSEAGGPFLFLQALLRTSTIPTYLRGDWYRDWGSVEQYFRLVPADQAPDAAIEQGVMTVHGWSRQGPIRALP</sequence>
<feature type="chain" id="PRO_0000220560" description="Probable arabinosyltransferase A">
    <location>
        <begin position="1"/>
        <end position="1108"/>
    </location>
</feature>
<feature type="transmembrane region" description="Helical" evidence="1">
    <location>
        <begin position="12"/>
        <end position="34"/>
    </location>
</feature>
<feature type="transmembrane region" description="Helical" evidence="1">
    <location>
        <begin position="204"/>
        <end position="223"/>
    </location>
</feature>
<feature type="transmembrane region" description="Helical" evidence="1">
    <location>
        <begin position="258"/>
        <end position="280"/>
    </location>
</feature>
<feature type="transmembrane region" description="Helical" evidence="1">
    <location>
        <begin position="334"/>
        <end position="356"/>
    </location>
</feature>
<feature type="transmembrane region" description="Helical" evidence="1">
    <location>
        <begin position="368"/>
        <end position="387"/>
    </location>
</feature>
<feature type="transmembrane region" description="Helical" evidence="1">
    <location>
        <begin position="397"/>
        <end position="414"/>
    </location>
</feature>
<feature type="transmembrane region" description="Helical" evidence="1">
    <location>
        <begin position="421"/>
        <end position="443"/>
    </location>
</feature>
<feature type="transmembrane region" description="Helical" evidence="1">
    <location>
        <begin position="463"/>
        <end position="482"/>
    </location>
</feature>
<feature type="transmembrane region" description="Helical" evidence="1">
    <location>
        <begin position="531"/>
        <end position="553"/>
    </location>
</feature>
<feature type="transmembrane region" description="Helical" evidence="1">
    <location>
        <begin position="582"/>
        <end position="604"/>
    </location>
</feature>
<feature type="transmembrane region" description="Helical" evidence="1">
    <location>
        <begin position="616"/>
        <end position="638"/>
    </location>
</feature>
<feature type="transmembrane region" description="Helical" evidence="1">
    <location>
        <begin position="653"/>
        <end position="675"/>
    </location>
</feature>
<feature type="transmembrane region" description="Helical" evidence="1">
    <location>
        <begin position="696"/>
        <end position="718"/>
    </location>
</feature>
<feature type="region of interest" description="Disordered" evidence="2">
    <location>
        <begin position="804"/>
        <end position="825"/>
    </location>
</feature>
<name>EMBA_MYCAV</name>
<reference key="1">
    <citation type="journal article" date="1996" name="Proc. Natl. Acad. Sci. U.S.A.">
        <title>The embAB genes of Mycobacterium avium encode an arabinosyl transferase involved in cell wall arabinan biosynthesis that is the target for the antimycobacterial drug ethambutol.</title>
        <authorList>
            <person name="Belanger A.E."/>
            <person name="Besra G.S."/>
            <person name="Ford M.E."/>
            <person name="Mikusova K."/>
            <person name="Belisle J.T."/>
            <person name="Brennan P.J."/>
            <person name="Inamine J.M."/>
        </authorList>
    </citation>
    <scope>NUCLEOTIDE SEQUENCE [GENOMIC DNA]</scope>
    <source>
        <strain>2151</strain>
    </source>
</reference>
<proteinExistence type="inferred from homology"/>
<evidence type="ECO:0000255" key="1"/>
<evidence type="ECO:0000256" key="2">
    <source>
        <dbReference type="SAM" id="MobiDB-lite"/>
    </source>
</evidence>
<evidence type="ECO:0000305" key="3"/>
<accession>P71485</accession>